<sequence length="490" mass="54776">MKTILVITDGIGYSDKTQYNAFYHAKKPTYDYLFKNVPYGMIDTFGLSVGLPQGQMGNSEVGHMCIGSGRVLYQDLVRISRAIEYDEIKDNPALVEVTQQSAVVHLCGLLSDGGVHSHIVHLKALAQILSTQGKRVYLHLITDGRDVLPKSALNYLADIESICEDNVSIASVSGRFYAMDRDKRWDRVQKAYESIALGKNPTNLSPKEYIQSQYDEGIFDEFLTPVSFGGFQGMNDDESFVFVNFRSDRAREIVDCLGNPQFKEFKRERYVKLHIATMTEYDATFPYPILFPKQNVQNTLAEVISSHRLKQFHTAETEKYAHVTFFLNGGREEAFIGEERVLIPSPNVKTYDLQPQMNASAVGDAVIKAVEQGYDFVVVNFANGDMVGHTGNLEAAIKAVEAVDKELGRIVESAQKHHYALFITSDHGNCEEMKDEKGNMLTNHTVGQVWCFGMIEGVSKIENGGLNNIAPSVLKAMNLPIPPEMDKPLF</sequence>
<dbReference type="EC" id="5.4.2.12" evidence="1"/>
<dbReference type="EMBL" id="AE017125">
    <property type="protein sequence ID" value="AAP77766.1"/>
    <property type="molecule type" value="Genomic_DNA"/>
</dbReference>
<dbReference type="RefSeq" id="WP_011116009.1">
    <property type="nucleotide sequence ID" value="NC_004917.1"/>
</dbReference>
<dbReference type="SMR" id="Q7VGZ8"/>
<dbReference type="STRING" id="235279.HH_1169"/>
<dbReference type="KEGG" id="hhe:HH_1169"/>
<dbReference type="eggNOG" id="COG0696">
    <property type="taxonomic scope" value="Bacteria"/>
</dbReference>
<dbReference type="HOGENOM" id="CLU_026099_2_0_7"/>
<dbReference type="OrthoDB" id="9800863at2"/>
<dbReference type="UniPathway" id="UPA00109">
    <property type="reaction ID" value="UER00186"/>
</dbReference>
<dbReference type="Proteomes" id="UP000002495">
    <property type="component" value="Chromosome"/>
</dbReference>
<dbReference type="GO" id="GO:0005829">
    <property type="term" value="C:cytosol"/>
    <property type="evidence" value="ECO:0007669"/>
    <property type="project" value="TreeGrafter"/>
</dbReference>
<dbReference type="GO" id="GO:0030145">
    <property type="term" value="F:manganese ion binding"/>
    <property type="evidence" value="ECO:0007669"/>
    <property type="project" value="UniProtKB-UniRule"/>
</dbReference>
<dbReference type="GO" id="GO:0004619">
    <property type="term" value="F:phosphoglycerate mutase activity"/>
    <property type="evidence" value="ECO:0007669"/>
    <property type="project" value="UniProtKB-EC"/>
</dbReference>
<dbReference type="GO" id="GO:0006007">
    <property type="term" value="P:glucose catabolic process"/>
    <property type="evidence" value="ECO:0007669"/>
    <property type="project" value="InterPro"/>
</dbReference>
<dbReference type="GO" id="GO:0006096">
    <property type="term" value="P:glycolytic process"/>
    <property type="evidence" value="ECO:0007669"/>
    <property type="project" value="UniProtKB-UniRule"/>
</dbReference>
<dbReference type="CDD" id="cd16010">
    <property type="entry name" value="iPGM"/>
    <property type="match status" value="1"/>
</dbReference>
<dbReference type="FunFam" id="3.40.1450.10:FF:000002">
    <property type="entry name" value="2,3-bisphosphoglycerate-independent phosphoglycerate mutase"/>
    <property type="match status" value="1"/>
</dbReference>
<dbReference type="Gene3D" id="3.40.720.10">
    <property type="entry name" value="Alkaline Phosphatase, subunit A"/>
    <property type="match status" value="1"/>
</dbReference>
<dbReference type="Gene3D" id="3.40.1450.10">
    <property type="entry name" value="BPG-independent phosphoglycerate mutase, domain B"/>
    <property type="match status" value="1"/>
</dbReference>
<dbReference type="HAMAP" id="MF_01038">
    <property type="entry name" value="GpmI"/>
    <property type="match status" value="1"/>
</dbReference>
<dbReference type="InterPro" id="IPR017850">
    <property type="entry name" value="Alkaline_phosphatase_core_sf"/>
</dbReference>
<dbReference type="InterPro" id="IPR011258">
    <property type="entry name" value="BPG-indep_PGM_N"/>
</dbReference>
<dbReference type="InterPro" id="IPR006124">
    <property type="entry name" value="Metalloenzyme"/>
</dbReference>
<dbReference type="InterPro" id="IPR036646">
    <property type="entry name" value="PGAM_B_sf"/>
</dbReference>
<dbReference type="InterPro" id="IPR005995">
    <property type="entry name" value="Pgm_bpd_ind"/>
</dbReference>
<dbReference type="NCBIfam" id="TIGR01307">
    <property type="entry name" value="pgm_bpd_ind"/>
    <property type="match status" value="1"/>
</dbReference>
<dbReference type="PANTHER" id="PTHR31637">
    <property type="entry name" value="2,3-BISPHOSPHOGLYCERATE-INDEPENDENT PHOSPHOGLYCERATE MUTASE"/>
    <property type="match status" value="1"/>
</dbReference>
<dbReference type="PANTHER" id="PTHR31637:SF0">
    <property type="entry name" value="2,3-BISPHOSPHOGLYCERATE-INDEPENDENT PHOSPHOGLYCERATE MUTASE"/>
    <property type="match status" value="1"/>
</dbReference>
<dbReference type="Pfam" id="PF06415">
    <property type="entry name" value="iPGM_N"/>
    <property type="match status" value="1"/>
</dbReference>
<dbReference type="Pfam" id="PF01676">
    <property type="entry name" value="Metalloenzyme"/>
    <property type="match status" value="1"/>
</dbReference>
<dbReference type="PIRSF" id="PIRSF001492">
    <property type="entry name" value="IPGAM"/>
    <property type="match status" value="1"/>
</dbReference>
<dbReference type="SUPFAM" id="SSF64158">
    <property type="entry name" value="2,3-Bisphosphoglycerate-independent phosphoglycerate mutase, substrate-binding domain"/>
    <property type="match status" value="1"/>
</dbReference>
<dbReference type="SUPFAM" id="SSF53649">
    <property type="entry name" value="Alkaline phosphatase-like"/>
    <property type="match status" value="1"/>
</dbReference>
<keyword id="KW-0324">Glycolysis</keyword>
<keyword id="KW-0413">Isomerase</keyword>
<keyword id="KW-0464">Manganese</keyword>
<keyword id="KW-0479">Metal-binding</keyword>
<keyword id="KW-1185">Reference proteome</keyword>
<name>GPMI_HELHP</name>
<protein>
    <recommendedName>
        <fullName evidence="1">2,3-bisphosphoglycerate-independent phosphoglycerate mutase</fullName>
        <shortName evidence="1">BPG-independent PGAM</shortName>
        <shortName evidence="1">Phosphoglyceromutase</shortName>
        <shortName evidence="1">iPGM</shortName>
        <ecNumber evidence="1">5.4.2.12</ecNumber>
    </recommendedName>
</protein>
<evidence type="ECO:0000255" key="1">
    <source>
        <dbReference type="HAMAP-Rule" id="MF_01038"/>
    </source>
</evidence>
<reference key="1">
    <citation type="journal article" date="2003" name="Proc. Natl. Acad. Sci. U.S.A.">
        <title>The complete genome sequence of the carcinogenic bacterium Helicobacter hepaticus.</title>
        <authorList>
            <person name="Suerbaum S."/>
            <person name="Josenhans C."/>
            <person name="Sterzenbach T."/>
            <person name="Drescher B."/>
            <person name="Brandt P."/>
            <person name="Bell M."/>
            <person name="Droege M."/>
            <person name="Fartmann B."/>
            <person name="Fischer H.-P."/>
            <person name="Ge Z."/>
            <person name="Hoerster A."/>
            <person name="Holland R."/>
            <person name="Klein K."/>
            <person name="Koenig J."/>
            <person name="Macko L."/>
            <person name="Mendz G.L."/>
            <person name="Nyakatura G."/>
            <person name="Schauer D.B."/>
            <person name="Shen Z."/>
            <person name="Weber J."/>
            <person name="Frosch M."/>
            <person name="Fox J.G."/>
        </authorList>
    </citation>
    <scope>NUCLEOTIDE SEQUENCE [LARGE SCALE GENOMIC DNA]</scope>
    <source>
        <strain>ATCC 51449 / 3B1</strain>
    </source>
</reference>
<feature type="chain" id="PRO_0000212153" description="2,3-bisphosphoglycerate-independent phosphoglycerate mutase">
    <location>
        <begin position="1"/>
        <end position="490"/>
    </location>
</feature>
<feature type="active site" description="Phosphoserine intermediate" evidence="1">
    <location>
        <position position="59"/>
    </location>
</feature>
<feature type="binding site" evidence="1">
    <location>
        <position position="9"/>
    </location>
    <ligand>
        <name>Mn(2+)</name>
        <dbReference type="ChEBI" id="CHEBI:29035"/>
        <label>2</label>
    </ligand>
</feature>
<feature type="binding site" evidence="1">
    <location>
        <position position="59"/>
    </location>
    <ligand>
        <name>Mn(2+)</name>
        <dbReference type="ChEBI" id="CHEBI:29035"/>
        <label>2</label>
    </ligand>
</feature>
<feature type="binding site" evidence="1">
    <location>
        <position position="116"/>
    </location>
    <ligand>
        <name>substrate</name>
    </ligand>
</feature>
<feature type="binding site" evidence="1">
    <location>
        <begin position="145"/>
        <end position="146"/>
    </location>
    <ligand>
        <name>substrate</name>
    </ligand>
</feature>
<feature type="binding site" evidence="1">
    <location>
        <position position="175"/>
    </location>
    <ligand>
        <name>substrate</name>
    </ligand>
</feature>
<feature type="binding site" evidence="1">
    <location>
        <position position="181"/>
    </location>
    <ligand>
        <name>substrate</name>
    </ligand>
</feature>
<feature type="binding site" evidence="1">
    <location>
        <begin position="246"/>
        <end position="249"/>
    </location>
    <ligand>
        <name>substrate</name>
    </ligand>
</feature>
<feature type="binding site" evidence="1">
    <location>
        <position position="319"/>
    </location>
    <ligand>
        <name>substrate</name>
    </ligand>
</feature>
<feature type="binding site" evidence="1">
    <location>
        <position position="385"/>
    </location>
    <ligand>
        <name>Mn(2+)</name>
        <dbReference type="ChEBI" id="CHEBI:29035"/>
        <label>1</label>
    </ligand>
</feature>
<feature type="binding site" evidence="1">
    <location>
        <position position="389"/>
    </location>
    <ligand>
        <name>Mn(2+)</name>
        <dbReference type="ChEBI" id="CHEBI:29035"/>
        <label>1</label>
    </ligand>
</feature>
<feature type="binding site" evidence="1">
    <location>
        <position position="426"/>
    </location>
    <ligand>
        <name>Mn(2+)</name>
        <dbReference type="ChEBI" id="CHEBI:29035"/>
        <label>2</label>
    </ligand>
</feature>
<feature type="binding site" evidence="1">
    <location>
        <position position="427"/>
    </location>
    <ligand>
        <name>Mn(2+)</name>
        <dbReference type="ChEBI" id="CHEBI:29035"/>
        <label>2</label>
    </ligand>
</feature>
<feature type="binding site" evidence="1">
    <location>
        <position position="444"/>
    </location>
    <ligand>
        <name>Mn(2+)</name>
        <dbReference type="ChEBI" id="CHEBI:29035"/>
        <label>1</label>
    </ligand>
</feature>
<gene>
    <name evidence="1" type="primary">gpmI</name>
    <name type="synonym">pgm</name>
    <name type="ordered locus">HH_1169</name>
</gene>
<comment type="function">
    <text evidence="1">Catalyzes the interconversion of 2-phosphoglycerate and 3-phosphoglycerate.</text>
</comment>
<comment type="catalytic activity">
    <reaction evidence="1">
        <text>(2R)-2-phosphoglycerate = (2R)-3-phosphoglycerate</text>
        <dbReference type="Rhea" id="RHEA:15901"/>
        <dbReference type="ChEBI" id="CHEBI:58272"/>
        <dbReference type="ChEBI" id="CHEBI:58289"/>
        <dbReference type="EC" id="5.4.2.12"/>
    </reaction>
</comment>
<comment type="cofactor">
    <cofactor evidence="1">
        <name>Mn(2+)</name>
        <dbReference type="ChEBI" id="CHEBI:29035"/>
    </cofactor>
    <text evidence="1">Binds 2 manganese ions per subunit.</text>
</comment>
<comment type="pathway">
    <text evidence="1">Carbohydrate degradation; glycolysis; pyruvate from D-glyceraldehyde 3-phosphate: step 3/5.</text>
</comment>
<comment type="subunit">
    <text evidence="1">Monomer.</text>
</comment>
<comment type="similarity">
    <text evidence="1">Belongs to the BPG-independent phosphoglycerate mutase family.</text>
</comment>
<organism>
    <name type="scientific">Helicobacter hepaticus (strain ATCC 51449 / 3B1)</name>
    <dbReference type="NCBI Taxonomy" id="235279"/>
    <lineage>
        <taxon>Bacteria</taxon>
        <taxon>Pseudomonadati</taxon>
        <taxon>Campylobacterota</taxon>
        <taxon>Epsilonproteobacteria</taxon>
        <taxon>Campylobacterales</taxon>
        <taxon>Helicobacteraceae</taxon>
        <taxon>Helicobacter</taxon>
    </lineage>
</organism>
<accession>Q7VGZ8</accession>
<proteinExistence type="inferred from homology"/>